<protein>
    <recommendedName>
        <fullName evidence="1">Cell division protein SepF</fullName>
    </recommendedName>
</protein>
<accession>A8LX76</accession>
<gene>
    <name evidence="1" type="primary">sepF</name>
    <name type="ordered locus">Sare_3434</name>
</gene>
<dbReference type="EMBL" id="CP000850">
    <property type="protein sequence ID" value="ABV99236.1"/>
    <property type="molecule type" value="Genomic_DNA"/>
</dbReference>
<dbReference type="SMR" id="A8LX76"/>
<dbReference type="STRING" id="391037.Sare_3434"/>
<dbReference type="KEGG" id="saq:Sare_3434"/>
<dbReference type="PATRIC" id="fig|391037.6.peg.3461"/>
<dbReference type="eggNOG" id="COG1799">
    <property type="taxonomic scope" value="Bacteria"/>
</dbReference>
<dbReference type="HOGENOM" id="CLU_078499_0_0_11"/>
<dbReference type="OrthoDB" id="3731101at2"/>
<dbReference type="GO" id="GO:0005737">
    <property type="term" value="C:cytoplasm"/>
    <property type="evidence" value="ECO:0007669"/>
    <property type="project" value="UniProtKB-SubCell"/>
</dbReference>
<dbReference type="GO" id="GO:0000917">
    <property type="term" value="P:division septum assembly"/>
    <property type="evidence" value="ECO:0007669"/>
    <property type="project" value="UniProtKB-KW"/>
</dbReference>
<dbReference type="GO" id="GO:0043093">
    <property type="term" value="P:FtsZ-dependent cytokinesis"/>
    <property type="evidence" value="ECO:0007669"/>
    <property type="project" value="UniProtKB-UniRule"/>
</dbReference>
<dbReference type="Gene3D" id="3.30.110.150">
    <property type="entry name" value="SepF-like protein"/>
    <property type="match status" value="1"/>
</dbReference>
<dbReference type="HAMAP" id="MF_01197">
    <property type="entry name" value="SepF"/>
    <property type="match status" value="1"/>
</dbReference>
<dbReference type="InterPro" id="IPR023052">
    <property type="entry name" value="Cell_div_SepF"/>
</dbReference>
<dbReference type="InterPro" id="IPR007561">
    <property type="entry name" value="Cell_div_SepF/SepF-rel"/>
</dbReference>
<dbReference type="InterPro" id="IPR038594">
    <property type="entry name" value="SepF-like_sf"/>
</dbReference>
<dbReference type="PANTHER" id="PTHR35798">
    <property type="entry name" value="CELL DIVISION PROTEIN SEPF"/>
    <property type="match status" value="1"/>
</dbReference>
<dbReference type="PANTHER" id="PTHR35798:SF1">
    <property type="entry name" value="CELL DIVISION PROTEIN SEPF"/>
    <property type="match status" value="1"/>
</dbReference>
<dbReference type="Pfam" id="PF04472">
    <property type="entry name" value="SepF"/>
    <property type="match status" value="1"/>
</dbReference>
<comment type="function">
    <text evidence="1">Cell division protein that is part of the divisome complex and is recruited early to the Z-ring. Probably stimulates Z-ring formation, perhaps through the cross-linking of FtsZ protofilaments. Its function overlaps with FtsA.</text>
</comment>
<comment type="subunit">
    <text evidence="1">Homodimer. Interacts with FtsZ.</text>
</comment>
<comment type="subcellular location">
    <subcellularLocation>
        <location evidence="1">Cytoplasm</location>
    </subcellularLocation>
    <text evidence="1">Localizes to the division site, in a FtsZ-dependent manner.</text>
</comment>
<comment type="similarity">
    <text evidence="1">Belongs to the SepF family.</text>
</comment>
<name>SEPF_SALAI</name>
<reference key="1">
    <citation type="submission" date="2007-10" db="EMBL/GenBank/DDBJ databases">
        <title>Complete sequence of Salinispora arenicola CNS-205.</title>
        <authorList>
            <consortium name="US DOE Joint Genome Institute"/>
            <person name="Copeland A."/>
            <person name="Lucas S."/>
            <person name="Lapidus A."/>
            <person name="Barry K."/>
            <person name="Glavina del Rio T."/>
            <person name="Dalin E."/>
            <person name="Tice H."/>
            <person name="Pitluck S."/>
            <person name="Foster B."/>
            <person name="Schmutz J."/>
            <person name="Larimer F."/>
            <person name="Land M."/>
            <person name="Hauser L."/>
            <person name="Kyrpides N."/>
            <person name="Ivanova N."/>
            <person name="Jensen P.R."/>
            <person name="Moore B.S."/>
            <person name="Penn K."/>
            <person name="Jenkins C."/>
            <person name="Udwary D."/>
            <person name="Xiang L."/>
            <person name="Gontang E."/>
            <person name="Richardson P."/>
        </authorList>
    </citation>
    <scope>NUCLEOTIDE SEQUENCE [LARGE SCALE GENOMIC DNA]</scope>
    <source>
        <strain>CNS-205</strain>
    </source>
</reference>
<evidence type="ECO:0000255" key="1">
    <source>
        <dbReference type="HAMAP-Rule" id="MF_01197"/>
    </source>
</evidence>
<evidence type="ECO:0000256" key="2">
    <source>
        <dbReference type="SAM" id="MobiDB-lite"/>
    </source>
</evidence>
<proteinExistence type="inferred from homology"/>
<sequence length="226" mass="25408">MGALRKAGVWLGLVEEDDERAYDDAGYDKGGYRESRYRSSRYSEDFGDEDDEDEEAAVPRSRRGDRSRLERAAARSGDVDHNVEGEQPERVERASVRSITRSAEPSESLTYHTRDNLALAPQPVRERVPADEEQRYQITTLHPTTYREARTIGEHFRDGVPVIINLTEMDEADARRLVDFAAGLAFGLRGTIERVTNRVFLLSPANVQVTAEDKAKIAEGGFFSLS</sequence>
<organism>
    <name type="scientific">Salinispora arenicola (strain CNS-205)</name>
    <dbReference type="NCBI Taxonomy" id="391037"/>
    <lineage>
        <taxon>Bacteria</taxon>
        <taxon>Bacillati</taxon>
        <taxon>Actinomycetota</taxon>
        <taxon>Actinomycetes</taxon>
        <taxon>Micromonosporales</taxon>
        <taxon>Micromonosporaceae</taxon>
        <taxon>Salinispora</taxon>
    </lineage>
</organism>
<feature type="chain" id="PRO_0000334072" description="Cell division protein SepF">
    <location>
        <begin position="1"/>
        <end position="226"/>
    </location>
</feature>
<feature type="region of interest" description="Disordered" evidence="2">
    <location>
        <begin position="20"/>
        <end position="116"/>
    </location>
</feature>
<feature type="compositionally biased region" description="Basic and acidic residues" evidence="2">
    <location>
        <begin position="22"/>
        <end position="44"/>
    </location>
</feature>
<feature type="compositionally biased region" description="Acidic residues" evidence="2">
    <location>
        <begin position="45"/>
        <end position="56"/>
    </location>
</feature>
<feature type="compositionally biased region" description="Basic and acidic residues" evidence="2">
    <location>
        <begin position="62"/>
        <end position="95"/>
    </location>
</feature>
<feature type="compositionally biased region" description="Polar residues" evidence="2">
    <location>
        <begin position="97"/>
        <end position="111"/>
    </location>
</feature>
<keyword id="KW-0131">Cell cycle</keyword>
<keyword id="KW-0132">Cell division</keyword>
<keyword id="KW-0963">Cytoplasm</keyword>
<keyword id="KW-0717">Septation</keyword>